<gene>
    <name evidence="1" type="primary">rnz</name>
    <name type="ordered locus">SPT_0698</name>
</gene>
<organism>
    <name type="scientific">Streptococcus pneumoniae (strain Taiwan19F-14)</name>
    <dbReference type="NCBI Taxonomy" id="487213"/>
    <lineage>
        <taxon>Bacteria</taxon>
        <taxon>Bacillati</taxon>
        <taxon>Bacillota</taxon>
        <taxon>Bacilli</taxon>
        <taxon>Lactobacillales</taxon>
        <taxon>Streptococcaceae</taxon>
        <taxon>Streptococcus</taxon>
    </lineage>
</organism>
<reference key="1">
    <citation type="journal article" date="2010" name="Genome Biol.">
        <title>Structure and dynamics of the pan-genome of Streptococcus pneumoniae and closely related species.</title>
        <authorList>
            <person name="Donati C."/>
            <person name="Hiller N.L."/>
            <person name="Tettelin H."/>
            <person name="Muzzi A."/>
            <person name="Croucher N.J."/>
            <person name="Angiuoli S.V."/>
            <person name="Oggioni M."/>
            <person name="Dunning Hotopp J.C."/>
            <person name="Hu F.Z."/>
            <person name="Riley D.R."/>
            <person name="Covacci A."/>
            <person name="Mitchell T.J."/>
            <person name="Bentley S.D."/>
            <person name="Kilian M."/>
            <person name="Ehrlich G.D."/>
            <person name="Rappuoli R."/>
            <person name="Moxon E.R."/>
            <person name="Masignani V."/>
        </authorList>
    </citation>
    <scope>NUCLEOTIDE SEQUENCE [LARGE SCALE GENOMIC DNA]</scope>
    <source>
        <strain>Taiwan19F-14</strain>
    </source>
</reference>
<proteinExistence type="inferred from homology"/>
<protein>
    <recommendedName>
        <fullName evidence="1">Ribonuclease Z</fullName>
        <shortName evidence="1">RNase Z</shortName>
        <ecNumber evidence="1">3.1.26.11</ecNumber>
    </recommendedName>
    <alternativeName>
        <fullName evidence="1">tRNA 3 endonuclease</fullName>
    </alternativeName>
    <alternativeName>
        <fullName evidence="1">tRNase Z</fullName>
    </alternativeName>
</protein>
<feature type="chain" id="PRO_1000188000" description="Ribonuclease Z">
    <location>
        <begin position="1"/>
        <end position="309"/>
    </location>
</feature>
<feature type="active site" description="Proton acceptor" evidence="1">
    <location>
        <position position="67"/>
    </location>
</feature>
<feature type="binding site" evidence="1">
    <location>
        <position position="63"/>
    </location>
    <ligand>
        <name>Zn(2+)</name>
        <dbReference type="ChEBI" id="CHEBI:29105"/>
        <label>1</label>
        <note>catalytic</note>
    </ligand>
</feature>
<feature type="binding site" evidence="1">
    <location>
        <position position="65"/>
    </location>
    <ligand>
        <name>Zn(2+)</name>
        <dbReference type="ChEBI" id="CHEBI:29105"/>
        <label>1</label>
        <note>catalytic</note>
    </ligand>
</feature>
<feature type="binding site" evidence="1">
    <location>
        <position position="67"/>
    </location>
    <ligand>
        <name>Zn(2+)</name>
        <dbReference type="ChEBI" id="CHEBI:29105"/>
        <label>2</label>
        <note>catalytic</note>
    </ligand>
</feature>
<feature type="binding site" evidence="1">
    <location>
        <position position="68"/>
    </location>
    <ligand>
        <name>Zn(2+)</name>
        <dbReference type="ChEBI" id="CHEBI:29105"/>
        <label>2</label>
        <note>catalytic</note>
    </ligand>
</feature>
<feature type="binding site" evidence="1">
    <location>
        <position position="145"/>
    </location>
    <ligand>
        <name>Zn(2+)</name>
        <dbReference type="ChEBI" id="CHEBI:29105"/>
        <label>1</label>
        <note>catalytic</note>
    </ligand>
</feature>
<feature type="binding site" evidence="1">
    <location>
        <position position="216"/>
    </location>
    <ligand>
        <name>Zn(2+)</name>
        <dbReference type="ChEBI" id="CHEBI:29105"/>
        <label>1</label>
        <note>catalytic</note>
    </ligand>
</feature>
<feature type="binding site" evidence="1">
    <location>
        <position position="216"/>
    </location>
    <ligand>
        <name>Zn(2+)</name>
        <dbReference type="ChEBI" id="CHEBI:29105"/>
        <label>2</label>
        <note>catalytic</note>
    </ligand>
</feature>
<feature type="binding site" evidence="1">
    <location>
        <position position="274"/>
    </location>
    <ligand>
        <name>Zn(2+)</name>
        <dbReference type="ChEBI" id="CHEBI:29105"/>
        <label>2</label>
        <note>catalytic</note>
    </ligand>
</feature>
<sequence>MDIQFLGTGAGQPSKARNVSSLALKLLDEINEVWLFDCGEGTQNRILETTIRPRKVSKIFITHLHGDHIFGLPGFLSSRAFQANEEQTDLEIYGPQGIKSFVLTSLRVSGSRLPYRIHFHEFDQDSLGKILETDKFTVYAEELDHTIFCVGYRVMQKDLEGTLDAEKLKAAGVPFGPLFGKIKNGQDLVLEDGTEIKAADYISAPRPGKIITILGDTRKTDASVRLAVNADVLVHESTYGKGDEKIARNHGHSTNMQAAQVAVEAGAKRLLLNHISARFLSKDISKLKKDAATIFENVHVVKDLEEVEI</sequence>
<name>RNZ_STRZT</name>
<comment type="function">
    <text evidence="1">Zinc phosphodiesterase, which displays some tRNA 3'-processing endonuclease activity. Probably involved in tRNA maturation, by removing a 3'-trailer from precursor tRNA.</text>
</comment>
<comment type="catalytic activity">
    <reaction evidence="1">
        <text>Endonucleolytic cleavage of RNA, removing extra 3' nucleotides from tRNA precursor, generating 3' termini of tRNAs. A 3'-hydroxy group is left at the tRNA terminus and a 5'-phosphoryl group is left at the trailer molecule.</text>
        <dbReference type="EC" id="3.1.26.11"/>
    </reaction>
</comment>
<comment type="cofactor">
    <cofactor evidence="1">
        <name>Zn(2+)</name>
        <dbReference type="ChEBI" id="CHEBI:29105"/>
    </cofactor>
    <text evidence="1">Binds 2 Zn(2+) ions.</text>
</comment>
<comment type="subunit">
    <text evidence="1">Homodimer.</text>
</comment>
<comment type="similarity">
    <text evidence="1">Belongs to the RNase Z family.</text>
</comment>
<dbReference type="EC" id="3.1.26.11" evidence="1"/>
<dbReference type="EMBL" id="CP000921">
    <property type="protein sequence ID" value="ACO23385.1"/>
    <property type="molecule type" value="Genomic_DNA"/>
</dbReference>
<dbReference type="RefSeq" id="WP_000354336.1">
    <property type="nucleotide sequence ID" value="NC_012469.1"/>
</dbReference>
<dbReference type="SMR" id="C1CQF2"/>
<dbReference type="GeneID" id="45653932"/>
<dbReference type="KEGG" id="snt:SPT_0698"/>
<dbReference type="HOGENOM" id="CLU_031317_2_0_9"/>
<dbReference type="GO" id="GO:0042781">
    <property type="term" value="F:3'-tRNA processing endoribonuclease activity"/>
    <property type="evidence" value="ECO:0007669"/>
    <property type="project" value="UniProtKB-UniRule"/>
</dbReference>
<dbReference type="GO" id="GO:0008270">
    <property type="term" value="F:zinc ion binding"/>
    <property type="evidence" value="ECO:0007669"/>
    <property type="project" value="UniProtKB-UniRule"/>
</dbReference>
<dbReference type="CDD" id="cd07717">
    <property type="entry name" value="RNaseZ_ZiPD-like_MBL-fold"/>
    <property type="match status" value="1"/>
</dbReference>
<dbReference type="FunFam" id="3.60.15.10:FF:000002">
    <property type="entry name" value="Ribonuclease Z"/>
    <property type="match status" value="1"/>
</dbReference>
<dbReference type="Gene3D" id="3.60.15.10">
    <property type="entry name" value="Ribonuclease Z/Hydroxyacylglutathione hydrolase-like"/>
    <property type="match status" value="1"/>
</dbReference>
<dbReference type="HAMAP" id="MF_01818">
    <property type="entry name" value="RNase_Z_BN"/>
    <property type="match status" value="1"/>
</dbReference>
<dbReference type="InterPro" id="IPR001279">
    <property type="entry name" value="Metallo-B-lactamas"/>
</dbReference>
<dbReference type="InterPro" id="IPR036866">
    <property type="entry name" value="RibonucZ/Hydroxyglut_hydro"/>
</dbReference>
<dbReference type="InterPro" id="IPR013471">
    <property type="entry name" value="RNase_Z/BN"/>
</dbReference>
<dbReference type="NCBIfam" id="NF000801">
    <property type="entry name" value="PRK00055.1-3"/>
    <property type="match status" value="1"/>
</dbReference>
<dbReference type="NCBIfam" id="TIGR02651">
    <property type="entry name" value="RNase_Z"/>
    <property type="match status" value="1"/>
</dbReference>
<dbReference type="PANTHER" id="PTHR46018">
    <property type="entry name" value="ZINC PHOSPHODIESTERASE ELAC PROTEIN 1"/>
    <property type="match status" value="1"/>
</dbReference>
<dbReference type="PANTHER" id="PTHR46018:SF2">
    <property type="entry name" value="ZINC PHOSPHODIESTERASE ELAC PROTEIN 1"/>
    <property type="match status" value="1"/>
</dbReference>
<dbReference type="Pfam" id="PF00753">
    <property type="entry name" value="Lactamase_B"/>
    <property type="match status" value="1"/>
</dbReference>
<dbReference type="SUPFAM" id="SSF56281">
    <property type="entry name" value="Metallo-hydrolase/oxidoreductase"/>
    <property type="match status" value="1"/>
</dbReference>
<accession>C1CQF2</accession>
<evidence type="ECO:0000255" key="1">
    <source>
        <dbReference type="HAMAP-Rule" id="MF_01818"/>
    </source>
</evidence>
<keyword id="KW-0255">Endonuclease</keyword>
<keyword id="KW-0378">Hydrolase</keyword>
<keyword id="KW-0479">Metal-binding</keyword>
<keyword id="KW-0540">Nuclease</keyword>
<keyword id="KW-0819">tRNA processing</keyword>
<keyword id="KW-0862">Zinc</keyword>